<sequence length="552" mass="62125">MVDMGGLDNLIANTAYLQARKSSDADSKELQRRRRSLMLPGPQSCEQLRQALATDFHSLCEQQPIGRRLFRDFLATVPAYQEARGFLEEVQSWELAEEGPAKGSALQGLVTTCAAAPVPGRPHPFFSPALVTKCQAATTDDDRASLVELAKAEVMAFLQDQPFREFLASPFYDKFLQWKVFEMQPVSDKYFEEFRVLGKGGFGEVCAVQVKNTGKMYACKKLDKKRLKKKNGEKMALLEKEILERVSSPFIVSLAYAFESKSHLCLVMSLMNGGDLKFHIYSVGEPGLDMSRVIFYSAQITCGVLHLHSLGIVYRDMKPENVLLDDLGNCRLSDLGLAVQIQDGKPITQRAGTNGYMAPEILMEKASYSYPVDWFAMGCSIYEMVAGRTPFRDYKEKVSKEDLKQRTLKEEVRFQHSNFTEEAKDICRLFLAKTPEQRLGSREKSDDPRKHHFFKTINFPRLEAGLVEPPFVPDPSVVYAKDINEIDDFSEVRGVEFDDNDKQFFQRFATGAVPIAWQEEIIETGPFAELNDPNRPAGCGEGSSRSGVCLLL</sequence>
<organism>
    <name type="scientific">Bos taurus</name>
    <name type="common">Bovine</name>
    <dbReference type="NCBI Taxonomy" id="9913"/>
    <lineage>
        <taxon>Eukaryota</taxon>
        <taxon>Metazoa</taxon>
        <taxon>Chordata</taxon>
        <taxon>Craniata</taxon>
        <taxon>Vertebrata</taxon>
        <taxon>Euteleostomi</taxon>
        <taxon>Mammalia</taxon>
        <taxon>Eutheria</taxon>
        <taxon>Laurasiatheria</taxon>
        <taxon>Artiodactyla</taxon>
        <taxon>Ruminantia</taxon>
        <taxon>Pecora</taxon>
        <taxon>Bovidae</taxon>
        <taxon>Bovinae</taxon>
        <taxon>Bos</taxon>
    </lineage>
</organism>
<name>GRK7_BOVIN</name>
<comment type="function">
    <text evidence="2">Retina-specific kinase involved in the shutoff of the photoresponse and adaptation to changing light conditions via cone opsin phosphorylation, including rhodopsin (RHO).</text>
</comment>
<comment type="catalytic activity">
    <reaction evidence="2">
        <text>L-threonyl-[rhodopsin] + ATP = O-phospho-L-threonyl-[rhodopsin] + ADP + H(+)</text>
        <dbReference type="Rhea" id="RHEA:56552"/>
        <dbReference type="Rhea" id="RHEA-COMP:14596"/>
        <dbReference type="Rhea" id="RHEA-COMP:14597"/>
        <dbReference type="ChEBI" id="CHEBI:15378"/>
        <dbReference type="ChEBI" id="CHEBI:30013"/>
        <dbReference type="ChEBI" id="CHEBI:30616"/>
        <dbReference type="ChEBI" id="CHEBI:61977"/>
        <dbReference type="ChEBI" id="CHEBI:456216"/>
        <dbReference type="EC" id="2.7.11.14"/>
    </reaction>
</comment>
<comment type="catalytic activity">
    <reaction evidence="2">
        <text>L-seryl-[rhodopsin] + ATP = O-phospho-L-seryl-[rhodopsin] + ADP + H(+)</text>
        <dbReference type="Rhea" id="RHEA:23356"/>
        <dbReference type="Rhea" id="RHEA-COMP:14594"/>
        <dbReference type="Rhea" id="RHEA-COMP:14595"/>
        <dbReference type="ChEBI" id="CHEBI:15378"/>
        <dbReference type="ChEBI" id="CHEBI:29999"/>
        <dbReference type="ChEBI" id="CHEBI:30616"/>
        <dbReference type="ChEBI" id="CHEBI:83421"/>
        <dbReference type="ChEBI" id="CHEBI:456216"/>
        <dbReference type="EC" id="2.7.11.14"/>
    </reaction>
</comment>
<comment type="activity regulation">
    <text evidence="1">Inhibited by phosphorylation of Ser-36.</text>
</comment>
<comment type="subunit">
    <text evidence="8">Interacts (when prenylated) with PDE6D; this promotes release from membranes.</text>
</comment>
<comment type="subcellular location">
    <subcellularLocation>
        <location evidence="10">Membrane</location>
        <topology evidence="10">Lipid-anchor</topology>
    </subcellularLocation>
</comment>
<comment type="PTM">
    <text evidence="1">Autophosphorylated in vitro at Ser-490. Phosphorylation at Ser-36 is regulated by light and activated by cAMP.</text>
</comment>
<comment type="miscellaneous">
    <text>Although the protein is present in a diversity of vertebrates ranging from bony fish to mammals, the mouse and rat orthologous proteins do not exist.</text>
</comment>
<comment type="similarity">
    <text evidence="9">Belongs to the protein kinase superfamily. AGC Ser/Thr protein kinase family. GPRK subfamily.</text>
</comment>
<accession>Q8WMV0</accession>
<reference key="1">
    <citation type="submission" date="2005-06" db="EMBL/GenBank/DDBJ databases">
        <authorList>
            <person name="Zhang K."/>
            <person name="Chen J.K.C."/>
            <person name="Baehr W."/>
        </authorList>
    </citation>
    <scope>NUCLEOTIDE SEQUENCE [MRNA]</scope>
</reference>
<reference key="2">
    <citation type="journal article" date="2004" name="J. Biol. Chem.">
        <title>Photoreceptor cGMP phosphodiesterase delta subunit (PDEdelta) functions as a prenyl-binding protein.</title>
        <authorList>
            <person name="Zhang H."/>
            <person name="Liu X.H."/>
            <person name="Zhang K."/>
            <person name="Chen C.K."/>
            <person name="Frederick J.M."/>
            <person name="Prestwich G.D."/>
            <person name="Baehr W."/>
        </authorList>
    </citation>
    <scope>INTERACTION WITH PDE6D</scope>
</reference>
<protein>
    <recommendedName>
        <fullName>Rhodopsin kinase GRK7</fullName>
        <ecNumber evidence="2">2.7.11.14</ecNumber>
    </recommendedName>
    <alternativeName>
        <fullName>G protein-coupled receptor kinase 7</fullName>
    </alternativeName>
    <alternativeName>
        <fullName>G protein-coupled receptor kinase GRK7</fullName>
    </alternativeName>
</protein>
<dbReference type="EC" id="2.7.11.14" evidence="2"/>
<dbReference type="EMBL" id="AY049726">
    <property type="protein sequence ID" value="AAL06241.1"/>
    <property type="molecule type" value="mRNA"/>
</dbReference>
<dbReference type="RefSeq" id="NP_776757.1">
    <property type="nucleotide sequence ID" value="NM_174332.3"/>
</dbReference>
<dbReference type="SMR" id="Q8WMV0"/>
<dbReference type="FunCoup" id="Q8WMV0">
    <property type="interactions" value="209"/>
</dbReference>
<dbReference type="STRING" id="9913.ENSBTAP00000029175"/>
<dbReference type="PaxDb" id="9913-ENSBTAP00000029175"/>
<dbReference type="GeneID" id="281802"/>
<dbReference type="KEGG" id="bta:281802"/>
<dbReference type="CTD" id="131890"/>
<dbReference type="eggNOG" id="KOG0986">
    <property type="taxonomic scope" value="Eukaryota"/>
</dbReference>
<dbReference type="InParanoid" id="Q8WMV0"/>
<dbReference type="OrthoDB" id="354826at2759"/>
<dbReference type="Proteomes" id="UP000009136">
    <property type="component" value="Unplaced"/>
</dbReference>
<dbReference type="GO" id="GO:0005737">
    <property type="term" value="C:cytoplasm"/>
    <property type="evidence" value="ECO:0000318"/>
    <property type="project" value="GO_Central"/>
</dbReference>
<dbReference type="GO" id="GO:0016020">
    <property type="term" value="C:membrane"/>
    <property type="evidence" value="ECO:0007669"/>
    <property type="project" value="UniProtKB-SubCell"/>
</dbReference>
<dbReference type="GO" id="GO:0005524">
    <property type="term" value="F:ATP binding"/>
    <property type="evidence" value="ECO:0007669"/>
    <property type="project" value="UniProtKB-KW"/>
</dbReference>
<dbReference type="GO" id="GO:0050254">
    <property type="term" value="F:rhodopsin kinase activity"/>
    <property type="evidence" value="ECO:0000250"/>
    <property type="project" value="UniProtKB"/>
</dbReference>
<dbReference type="GO" id="GO:0009966">
    <property type="term" value="P:regulation of signal transduction"/>
    <property type="evidence" value="ECO:0000318"/>
    <property type="project" value="GO_Central"/>
</dbReference>
<dbReference type="GO" id="GO:0007165">
    <property type="term" value="P:signal transduction"/>
    <property type="evidence" value="ECO:0007669"/>
    <property type="project" value="InterPro"/>
</dbReference>
<dbReference type="GO" id="GO:0007601">
    <property type="term" value="P:visual perception"/>
    <property type="evidence" value="ECO:0007669"/>
    <property type="project" value="UniProtKB-KW"/>
</dbReference>
<dbReference type="CDD" id="cd05607">
    <property type="entry name" value="STKc_GRK7"/>
    <property type="match status" value="1"/>
</dbReference>
<dbReference type="FunFam" id="1.10.167.10:FF:000027">
    <property type="entry name" value="G protein-coupled receptor kinase"/>
    <property type="match status" value="1"/>
</dbReference>
<dbReference type="FunFam" id="1.10.510.10:FF:000074">
    <property type="entry name" value="G protein-coupled receptor kinase"/>
    <property type="match status" value="1"/>
</dbReference>
<dbReference type="Gene3D" id="3.30.200.20">
    <property type="entry name" value="Phosphorylase Kinase, domain 1"/>
    <property type="match status" value="1"/>
</dbReference>
<dbReference type="Gene3D" id="1.10.167.10">
    <property type="entry name" value="Regulator of G-protein Signalling 4, domain 2"/>
    <property type="match status" value="1"/>
</dbReference>
<dbReference type="Gene3D" id="1.10.510.10">
    <property type="entry name" value="Transferase(Phosphotransferase) domain 1"/>
    <property type="match status" value="1"/>
</dbReference>
<dbReference type="InterPro" id="IPR000961">
    <property type="entry name" value="AGC-kinase_C"/>
</dbReference>
<dbReference type="InterPro" id="IPR000239">
    <property type="entry name" value="GPCR_kinase"/>
</dbReference>
<dbReference type="InterPro" id="IPR011009">
    <property type="entry name" value="Kinase-like_dom_sf"/>
</dbReference>
<dbReference type="InterPro" id="IPR000719">
    <property type="entry name" value="Prot_kinase_dom"/>
</dbReference>
<dbReference type="InterPro" id="IPR017441">
    <property type="entry name" value="Protein_kinase_ATP_BS"/>
</dbReference>
<dbReference type="InterPro" id="IPR016137">
    <property type="entry name" value="RGS"/>
</dbReference>
<dbReference type="InterPro" id="IPR036305">
    <property type="entry name" value="RGS_sf"/>
</dbReference>
<dbReference type="InterPro" id="IPR044926">
    <property type="entry name" value="RGS_subdomain_2"/>
</dbReference>
<dbReference type="InterPro" id="IPR008271">
    <property type="entry name" value="Ser/Thr_kinase_AS"/>
</dbReference>
<dbReference type="PANTHER" id="PTHR24355">
    <property type="entry name" value="G PROTEIN-COUPLED RECEPTOR KINASE/RIBOSOMAL PROTEIN S6 KINASE"/>
    <property type="match status" value="1"/>
</dbReference>
<dbReference type="PANTHER" id="PTHR24355:SF12">
    <property type="entry name" value="RHODOPSIN KINASE GRK7"/>
    <property type="match status" value="1"/>
</dbReference>
<dbReference type="Pfam" id="PF00069">
    <property type="entry name" value="Pkinase"/>
    <property type="match status" value="1"/>
</dbReference>
<dbReference type="Pfam" id="PF00615">
    <property type="entry name" value="RGS"/>
    <property type="match status" value="1"/>
</dbReference>
<dbReference type="PRINTS" id="PR00717">
    <property type="entry name" value="GPCRKINASE"/>
</dbReference>
<dbReference type="SMART" id="SM00315">
    <property type="entry name" value="RGS"/>
    <property type="match status" value="1"/>
</dbReference>
<dbReference type="SMART" id="SM00133">
    <property type="entry name" value="S_TK_X"/>
    <property type="match status" value="1"/>
</dbReference>
<dbReference type="SMART" id="SM00220">
    <property type="entry name" value="S_TKc"/>
    <property type="match status" value="1"/>
</dbReference>
<dbReference type="SUPFAM" id="SSF56112">
    <property type="entry name" value="Protein kinase-like (PK-like)"/>
    <property type="match status" value="1"/>
</dbReference>
<dbReference type="SUPFAM" id="SSF48097">
    <property type="entry name" value="Regulator of G-protein signaling, RGS"/>
    <property type="match status" value="1"/>
</dbReference>
<dbReference type="PROSITE" id="PS51285">
    <property type="entry name" value="AGC_KINASE_CTER"/>
    <property type="match status" value="1"/>
</dbReference>
<dbReference type="PROSITE" id="PS00107">
    <property type="entry name" value="PROTEIN_KINASE_ATP"/>
    <property type="match status" value="1"/>
</dbReference>
<dbReference type="PROSITE" id="PS50011">
    <property type="entry name" value="PROTEIN_KINASE_DOM"/>
    <property type="match status" value="1"/>
</dbReference>
<dbReference type="PROSITE" id="PS00108">
    <property type="entry name" value="PROTEIN_KINASE_ST"/>
    <property type="match status" value="1"/>
</dbReference>
<dbReference type="PROSITE" id="PS50132">
    <property type="entry name" value="RGS"/>
    <property type="match status" value="1"/>
</dbReference>
<gene>
    <name type="primary">GRK7</name>
</gene>
<feature type="chain" id="PRO_0000274193" description="Rhodopsin kinase GRK7">
    <location>
        <begin position="1"/>
        <end position="549"/>
    </location>
</feature>
<feature type="propeptide" id="PRO_0000274194" description="Removed in mature form" evidence="1">
    <location>
        <begin position="550"/>
        <end position="552"/>
    </location>
</feature>
<feature type="domain" description="RGS" evidence="5">
    <location>
        <begin position="56"/>
        <end position="176"/>
    </location>
</feature>
<feature type="domain" description="Protein kinase" evidence="4">
    <location>
        <begin position="191"/>
        <end position="454"/>
    </location>
</feature>
<feature type="domain" description="AGC-kinase C-terminal" evidence="6">
    <location>
        <begin position="455"/>
        <end position="520"/>
    </location>
</feature>
<feature type="active site" description="Proton acceptor" evidence="4 7">
    <location>
        <position position="316"/>
    </location>
</feature>
<feature type="binding site" evidence="4">
    <location>
        <begin position="197"/>
        <end position="205"/>
    </location>
    <ligand>
        <name>ATP</name>
        <dbReference type="ChEBI" id="CHEBI:30616"/>
    </ligand>
</feature>
<feature type="binding site" evidence="4">
    <location>
        <position position="220"/>
    </location>
    <ligand>
        <name>ATP</name>
        <dbReference type="ChEBI" id="CHEBI:30616"/>
    </ligand>
</feature>
<feature type="modified residue" description="Phosphoserine; by PKA" evidence="2">
    <location>
        <position position="36"/>
    </location>
</feature>
<feature type="modified residue" description="Cysteine methyl ester" evidence="3">
    <location>
        <position position="549"/>
    </location>
</feature>
<feature type="lipid moiety-binding region" description="S-geranylgeranyl cysteine" evidence="3">
    <location>
        <position position="549"/>
    </location>
</feature>
<keyword id="KW-0067">ATP-binding</keyword>
<keyword id="KW-0418">Kinase</keyword>
<keyword id="KW-0449">Lipoprotein</keyword>
<keyword id="KW-0472">Membrane</keyword>
<keyword id="KW-0488">Methylation</keyword>
<keyword id="KW-0547">Nucleotide-binding</keyword>
<keyword id="KW-0597">Phosphoprotein</keyword>
<keyword id="KW-0636">Prenylation</keyword>
<keyword id="KW-1185">Reference proteome</keyword>
<keyword id="KW-0716">Sensory transduction</keyword>
<keyword id="KW-0723">Serine/threonine-protein kinase</keyword>
<keyword id="KW-0808">Transferase</keyword>
<keyword id="KW-0844">Vision</keyword>
<evidence type="ECO:0000250" key="1"/>
<evidence type="ECO:0000250" key="2">
    <source>
        <dbReference type="UniProtKB" id="Q8WTQ7"/>
    </source>
</evidence>
<evidence type="ECO:0000255" key="3"/>
<evidence type="ECO:0000255" key="4">
    <source>
        <dbReference type="PROSITE-ProRule" id="PRU00159"/>
    </source>
</evidence>
<evidence type="ECO:0000255" key="5">
    <source>
        <dbReference type="PROSITE-ProRule" id="PRU00171"/>
    </source>
</evidence>
<evidence type="ECO:0000255" key="6">
    <source>
        <dbReference type="PROSITE-ProRule" id="PRU00618"/>
    </source>
</evidence>
<evidence type="ECO:0000255" key="7">
    <source>
        <dbReference type="PROSITE-ProRule" id="PRU10027"/>
    </source>
</evidence>
<evidence type="ECO:0000269" key="8">
    <source>
    </source>
</evidence>
<evidence type="ECO:0000305" key="9"/>
<evidence type="ECO:0000305" key="10">
    <source>
    </source>
</evidence>
<proteinExistence type="evidence at protein level"/>